<feature type="chain" id="PRO_0000286801" description="Insulin-induced gene 2 protein">
    <location>
        <begin position="1"/>
        <end position="225"/>
    </location>
</feature>
<feature type="topological domain" description="Cytoplasmic" evidence="4">
    <location>
        <begin position="1"/>
        <end position="28"/>
    </location>
</feature>
<feature type="transmembrane region" description="Helical; Name=1" evidence="1">
    <location>
        <begin position="29"/>
        <end position="51"/>
    </location>
</feature>
<feature type="topological domain" description="Lumenal" evidence="4">
    <location>
        <begin position="52"/>
        <end position="70"/>
    </location>
</feature>
<feature type="transmembrane region" description="Helical; Name=2" evidence="1">
    <location>
        <begin position="71"/>
        <end position="88"/>
    </location>
</feature>
<feature type="topological domain" description="Cytoplasmic" evidence="4">
    <location>
        <begin position="89"/>
        <end position="103"/>
    </location>
</feature>
<feature type="transmembrane region" description="Helical; Name=3" evidence="1">
    <location>
        <begin position="104"/>
        <end position="126"/>
    </location>
</feature>
<feature type="topological domain" description="Lumenal" evidence="4">
    <location>
        <begin position="127"/>
        <end position="129"/>
    </location>
</feature>
<feature type="transmembrane region" description="Helical; Name=4" evidence="1">
    <location>
        <begin position="130"/>
        <end position="148"/>
    </location>
</feature>
<feature type="topological domain" description="Cytoplasmic" evidence="4">
    <location>
        <begin position="149"/>
        <end position="153"/>
    </location>
</feature>
<feature type="transmembrane region" description="Helical; Name=5" evidence="1">
    <location>
        <begin position="154"/>
        <end position="175"/>
    </location>
</feature>
<feature type="topological domain" description="Lumenal" evidence="4">
    <location>
        <begin position="176"/>
        <end position="189"/>
    </location>
</feature>
<feature type="transmembrane region" description="Helical; Name=6" evidence="1">
    <location>
        <begin position="190"/>
        <end position="207"/>
    </location>
</feature>
<feature type="topological domain" description="Cytoplasmic" evidence="4">
    <location>
        <begin position="208"/>
        <end position="225"/>
    </location>
</feature>
<feature type="short sequence motif" description="KxHxx" evidence="2">
    <location>
        <begin position="219"/>
        <end position="225"/>
    </location>
</feature>
<feature type="site" description="Required for the recognition of 25-hydroxycholesterol" evidence="2">
    <location>
        <position position="115"/>
    </location>
</feature>
<feature type="modified residue" description="Phosphoserine" evidence="2">
    <location>
        <position position="151"/>
    </location>
</feature>
<feature type="modified residue" description="Cysteine sulfenic acid (-SOH); alternate" evidence="2">
    <location>
        <position position="215"/>
    </location>
</feature>
<feature type="cross-link" description="Glycyl cysteine thioester (Cys-Gly) (interchain with G-Cter in ubiquitin); alternate" evidence="2">
    <location>
        <position position="215"/>
    </location>
</feature>
<reference key="1">
    <citation type="journal article" date="2003" name="Proc. Natl. Acad. Sci. U.S.A.">
        <title>Liver-specific mRNA for Insig-2 down-regulated by insulin: implications for fatty acid synthesis.</title>
        <authorList>
            <person name="Yabe D."/>
            <person name="Komuro R."/>
            <person name="Liang G."/>
            <person name="Goldstein J.L."/>
            <person name="Brown M.S."/>
        </authorList>
    </citation>
    <scope>NUCLEOTIDE SEQUENCE [MRNA]</scope>
    <scope>INDUCTION</scope>
</reference>
<reference key="2">
    <citation type="journal article" date="2004" name="Genome Res.">
        <title>The status, quality, and expansion of the NIH full-length cDNA project: the Mammalian Gene Collection (MGC).</title>
        <authorList>
            <consortium name="The MGC Project Team"/>
        </authorList>
    </citation>
    <scope>NUCLEOTIDE SEQUENCE [LARGE SCALE MRNA]</scope>
    <source>
        <tissue>Heart</tissue>
    </source>
</reference>
<gene>
    <name evidence="3 5" type="primary">Insig2</name>
</gene>
<organism>
    <name type="scientific">Rattus norvegicus</name>
    <name type="common">Rat</name>
    <dbReference type="NCBI Taxonomy" id="10116"/>
    <lineage>
        <taxon>Eukaryota</taxon>
        <taxon>Metazoa</taxon>
        <taxon>Chordata</taxon>
        <taxon>Craniata</taxon>
        <taxon>Vertebrata</taxon>
        <taxon>Euteleostomi</taxon>
        <taxon>Mammalia</taxon>
        <taxon>Eutheria</taxon>
        <taxon>Euarchontoglires</taxon>
        <taxon>Glires</taxon>
        <taxon>Rodentia</taxon>
        <taxon>Myomorpha</taxon>
        <taxon>Muroidea</taxon>
        <taxon>Muridae</taxon>
        <taxon>Murinae</taxon>
        <taxon>Rattus</taxon>
    </lineage>
</organism>
<proteinExistence type="evidence at transcript level"/>
<protein>
    <recommendedName>
        <fullName evidence="3">Insulin-induced gene 2 protein</fullName>
        <shortName evidence="3">INSIG-2</shortName>
    </recommendedName>
</protein>
<keyword id="KW-0153">Cholesterol metabolism</keyword>
<keyword id="KW-0256">Endoplasmic reticulum</keyword>
<keyword id="KW-0443">Lipid metabolism</keyword>
<keyword id="KW-0446">Lipid-binding</keyword>
<keyword id="KW-0472">Membrane</keyword>
<keyword id="KW-0558">Oxidation</keyword>
<keyword id="KW-0597">Phosphoprotein</keyword>
<keyword id="KW-1185">Reference proteome</keyword>
<keyword id="KW-0753">Steroid metabolism</keyword>
<keyword id="KW-1207">Sterol metabolism</keyword>
<keyword id="KW-0882">Thioester bond</keyword>
<keyword id="KW-0812">Transmembrane</keyword>
<keyword id="KW-1133">Transmembrane helix</keyword>
<keyword id="KW-0832">Ubl conjugation</keyword>
<name>INSI2_RAT</name>
<dbReference type="EMBL" id="AY152392">
    <property type="protein sequence ID" value="AAN78347.1"/>
    <property type="molecule type" value="mRNA"/>
</dbReference>
<dbReference type="EMBL" id="BC085682">
    <property type="protein sequence ID" value="AAH85682.1"/>
    <property type="molecule type" value="mRNA"/>
</dbReference>
<dbReference type="RefSeq" id="NP_001418189.1">
    <property type="nucleotide sequence ID" value="NM_001431260.1"/>
</dbReference>
<dbReference type="RefSeq" id="NP_001418190.1">
    <property type="nucleotide sequence ID" value="NM_001431261.1"/>
</dbReference>
<dbReference type="RefSeq" id="NP_001418191.1">
    <property type="nucleotide sequence ID" value="NM_001431262.1"/>
</dbReference>
<dbReference type="RefSeq" id="NP_835192.1">
    <property type="nucleotide sequence ID" value="NM_178091.5"/>
</dbReference>
<dbReference type="RefSeq" id="XP_006249729.1">
    <property type="nucleotide sequence ID" value="XM_006249667.3"/>
</dbReference>
<dbReference type="RefSeq" id="XP_006249730.1">
    <property type="nucleotide sequence ID" value="XM_006249668.3"/>
</dbReference>
<dbReference type="RefSeq" id="XP_006249731.1">
    <property type="nucleotide sequence ID" value="XM_006249669.3"/>
</dbReference>
<dbReference type="RefSeq" id="XP_017454176.1">
    <property type="nucleotide sequence ID" value="XM_017598687.1"/>
</dbReference>
<dbReference type="SMR" id="Q80UA9"/>
<dbReference type="FunCoup" id="Q80UA9">
    <property type="interactions" value="307"/>
</dbReference>
<dbReference type="STRING" id="10116.ENSRNOP00000003391"/>
<dbReference type="PhosphoSitePlus" id="Q80UA9"/>
<dbReference type="PaxDb" id="10116-ENSRNOP00000003391"/>
<dbReference type="GeneID" id="288985"/>
<dbReference type="KEGG" id="rno:288985"/>
<dbReference type="UCSC" id="RGD:631417">
    <property type="organism name" value="rat"/>
</dbReference>
<dbReference type="AGR" id="RGD:631417"/>
<dbReference type="CTD" id="51141"/>
<dbReference type="RGD" id="631417">
    <property type="gene designation" value="Insig2"/>
</dbReference>
<dbReference type="VEuPathDB" id="HostDB:ENSRNOG00000002478"/>
<dbReference type="eggNOG" id="KOG4363">
    <property type="taxonomic scope" value="Eukaryota"/>
</dbReference>
<dbReference type="HOGENOM" id="CLU_092922_0_0_1"/>
<dbReference type="InParanoid" id="Q80UA9"/>
<dbReference type="PhylomeDB" id="Q80UA9"/>
<dbReference type="TreeFam" id="TF331013"/>
<dbReference type="PRO" id="PR:Q80UA9"/>
<dbReference type="Proteomes" id="UP000002494">
    <property type="component" value="Chromosome 13"/>
</dbReference>
<dbReference type="Bgee" id="ENSRNOG00000002478">
    <property type="expression patterns" value="Expressed in liver and 18 other cell types or tissues"/>
</dbReference>
<dbReference type="GO" id="GO:0005783">
    <property type="term" value="C:endoplasmic reticulum"/>
    <property type="evidence" value="ECO:0000266"/>
    <property type="project" value="RGD"/>
</dbReference>
<dbReference type="GO" id="GO:0005789">
    <property type="term" value="C:endoplasmic reticulum membrane"/>
    <property type="evidence" value="ECO:0000266"/>
    <property type="project" value="RGD"/>
</dbReference>
<dbReference type="GO" id="GO:0032937">
    <property type="term" value="C:SREBP-SCAP-Insig complex"/>
    <property type="evidence" value="ECO:0000266"/>
    <property type="project" value="RGD"/>
</dbReference>
<dbReference type="GO" id="GO:0008142">
    <property type="term" value="F:oxysterol binding"/>
    <property type="evidence" value="ECO:0000250"/>
    <property type="project" value="UniProtKB"/>
</dbReference>
<dbReference type="GO" id="GO:0140311">
    <property type="term" value="F:protein sequestering activity"/>
    <property type="evidence" value="ECO:0000266"/>
    <property type="project" value="RGD"/>
</dbReference>
<dbReference type="GO" id="GO:0032869">
    <property type="term" value="P:cellular response to insulin stimulus"/>
    <property type="evidence" value="ECO:0000318"/>
    <property type="project" value="GO_Central"/>
</dbReference>
<dbReference type="GO" id="GO:0006695">
    <property type="term" value="P:cholesterol biosynthetic process"/>
    <property type="evidence" value="ECO:0000250"/>
    <property type="project" value="UniProtKB"/>
</dbReference>
<dbReference type="GO" id="GO:0008203">
    <property type="term" value="P:cholesterol metabolic process"/>
    <property type="evidence" value="ECO:0000266"/>
    <property type="project" value="RGD"/>
</dbReference>
<dbReference type="GO" id="GO:0060363">
    <property type="term" value="P:cranial suture morphogenesis"/>
    <property type="evidence" value="ECO:0000266"/>
    <property type="project" value="RGD"/>
</dbReference>
<dbReference type="GO" id="GO:0042472">
    <property type="term" value="P:inner ear morphogenesis"/>
    <property type="evidence" value="ECO:0000266"/>
    <property type="project" value="RGD"/>
</dbReference>
<dbReference type="GO" id="GO:0042474">
    <property type="term" value="P:middle ear morphogenesis"/>
    <property type="evidence" value="ECO:0000266"/>
    <property type="project" value="RGD"/>
</dbReference>
<dbReference type="GO" id="GO:0045717">
    <property type="term" value="P:negative regulation of fatty acid biosynthetic process"/>
    <property type="evidence" value="ECO:0000266"/>
    <property type="project" value="RGD"/>
</dbReference>
<dbReference type="GO" id="GO:0010894">
    <property type="term" value="P:negative regulation of steroid biosynthetic process"/>
    <property type="evidence" value="ECO:0000266"/>
    <property type="project" value="RGD"/>
</dbReference>
<dbReference type="GO" id="GO:0070542">
    <property type="term" value="P:response to fatty acid"/>
    <property type="evidence" value="ECO:0000270"/>
    <property type="project" value="RGD"/>
</dbReference>
<dbReference type="GO" id="GO:0032868">
    <property type="term" value="P:response to insulin"/>
    <property type="evidence" value="ECO:0000270"/>
    <property type="project" value="RGD"/>
</dbReference>
<dbReference type="GO" id="GO:0033993">
    <property type="term" value="P:response to lipid"/>
    <property type="evidence" value="ECO:0000270"/>
    <property type="project" value="RGD"/>
</dbReference>
<dbReference type="GO" id="GO:0006991">
    <property type="term" value="P:response to sterol depletion"/>
    <property type="evidence" value="ECO:0000266"/>
    <property type="project" value="RGD"/>
</dbReference>
<dbReference type="GO" id="GO:0060021">
    <property type="term" value="P:roof of mouth development"/>
    <property type="evidence" value="ECO:0000266"/>
    <property type="project" value="RGD"/>
</dbReference>
<dbReference type="GO" id="GO:0032933">
    <property type="term" value="P:SREBP signaling pathway"/>
    <property type="evidence" value="ECO:0000250"/>
    <property type="project" value="UniProtKB"/>
</dbReference>
<dbReference type="GO" id="GO:0036316">
    <property type="term" value="P:SREBP-SCAP complex retention in endoplasmic reticulum"/>
    <property type="evidence" value="ECO:0000250"/>
    <property type="project" value="UniProtKB"/>
</dbReference>
<dbReference type="GO" id="GO:0016126">
    <property type="term" value="P:sterol biosynthetic process"/>
    <property type="evidence" value="ECO:0000266"/>
    <property type="project" value="RGD"/>
</dbReference>
<dbReference type="GO" id="GO:0006641">
    <property type="term" value="P:triglyceride metabolic process"/>
    <property type="evidence" value="ECO:0000266"/>
    <property type="project" value="RGD"/>
</dbReference>
<dbReference type="InterPro" id="IPR025929">
    <property type="entry name" value="INSIG_fam"/>
</dbReference>
<dbReference type="PANTHER" id="PTHR15301">
    <property type="entry name" value="INSULIN-INDUCED GENE 1"/>
    <property type="match status" value="1"/>
</dbReference>
<dbReference type="PANTHER" id="PTHR15301:SF10">
    <property type="entry name" value="INSULIN-INDUCED GENE 2 PROTEIN"/>
    <property type="match status" value="1"/>
</dbReference>
<dbReference type="Pfam" id="PF07281">
    <property type="entry name" value="INSIG"/>
    <property type="match status" value="1"/>
</dbReference>
<comment type="function">
    <text evidence="2">Oxysterol-binding protein that mediates feedback control of cholesterol synthesis by controlling both endoplasmic reticulum to Golgi transport of SCAP and degradation of HMGCR. Acts as a negative regulator of cholesterol biosynthesis by mediating the retention of the SCAP-SREBP complex in the endoplasmic reticulum, thereby blocking the processing of sterol regulatory element-binding proteins (SREBPs) SREBF1/SREBP1 and SREBF2/SREBP2. Binds oxysterol, including 22-hydroxycholesterol, 24-hydroxycholesterol, 25-hydroxycholesterol and 27-hydroxycholesterol, regulating interaction with SCAP and retention of the SCAP-SREBP complex in the endoplasmic reticulum. In presence of oxysterol, interacts with SCAP, retaining the SCAP-SREBP complex in the endoplasmic reticulum, thereby preventing SCAP from escorting SREBF1/SREBP1 and SREBF2/SREBP2 to the Golgi. Sterol deprivation or phosphorylation by PCK1 reduce oxysterol-binding, disrupting the interaction between INSIG2 and SCAP, thereby promoting Golgi transport of the SCAP-SREBP complex, followed by processing and nuclear translocation of SREBF1/SREBP1 and SREBF2/SREBP2. Also regulates cholesterol synthesis by regulating degradation of HMGCR: initiates the sterol-mediated ubiquitin-mediated endoplasmic reticulum-associated degradation (ERAD) of HMGCR via recruitment of the reductase to the ubiquitin ligase RNF139.</text>
</comment>
<comment type="subunit">
    <text evidence="2">Interacts with SCAP; interaction is direct and only takes place in the presence of sterols; it prevents interaction between SCAP and the coat protein complex II (COPII). Associates with the SCAP-SREBP complex (composed of SCAP and SREBF1/SREBP1 or SREBF2/SREBP2); association is mediated via its interaction with SCAP and only takes place in the presence of sterols. Interacts with RNF139. Interacts with RNF145.</text>
</comment>
<comment type="subcellular location">
    <subcellularLocation>
        <location evidence="2">Endoplasmic reticulum membrane</location>
        <topology evidence="2">Multi-pass membrane protein</topology>
    </subcellularLocation>
</comment>
<comment type="domain">
    <text evidence="2">Binds oxysterols in a pocket within their transmembrane domains and interacts with SCAP via transmembrane domains 3 and 4.</text>
</comment>
<comment type="domain">
    <text evidence="2">The KxHxx motif mediates association with the coatomer complex.</text>
</comment>
<comment type="PTM">
    <text evidence="2">Phosphorylation at Ser-151 by PCK1 reduces binding to oxysterol, disrupting the interaction between INSIG2 and SCAP, thereby promoting nuclear translocation of SREBP proteins (SREBF1/SREBP1 or SREBF2/SREBP2) and subsequent transcription of downstream lipogenesis-related genes.</text>
</comment>
<comment type="PTM">
    <text evidence="2">Polyubiquitinated by AMFR/gp78 at Cys-215 in some tissues such as adipose tissues, undifferentiated myoblasts and liver, leading to its degradation. In differentiated myotubes, Cys-215 oxidation prevents ubiquitination at the same site, resulting in protein stabilization.</text>
</comment>
<comment type="PTM">
    <text evidence="2">Oxidized at Cys-215 in differentiated myotubes, preventing ubiquitination at the same site, and resulting in protein stabilization.</text>
</comment>
<comment type="similarity">
    <text evidence="4">Belongs to the INSIG family.</text>
</comment>
<sequence length="225" mass="24968">MAEGETESPRPKKRGPYISSVTSQSVNVVIRGVVLFFIGVFLALVLNLLQIQRNVTLFPPDVITSIFSSAWWVPPCCGTASAVIGLLYPCIDRHLGEPHKFKREWSSVMRCVAVFVGINHASAKVDFDNNFQFSLTLAALSVGLWWTFDRSRSGFGLGVGIAFLATVVTQLLVYNGVYQYTSPDFLYVRSWLPCIFFAGGITMGNIGRQLAMYECKVIAEKSHQE</sequence>
<accession>Q80UA9</accession>
<evidence type="ECO:0000250" key="1">
    <source>
        <dbReference type="UniProtKB" id="A1T557"/>
    </source>
</evidence>
<evidence type="ECO:0000250" key="2">
    <source>
        <dbReference type="UniProtKB" id="Q9Y5U4"/>
    </source>
</evidence>
<evidence type="ECO:0000303" key="3">
    <source>
    </source>
</evidence>
<evidence type="ECO:0000305" key="4"/>
<evidence type="ECO:0000312" key="5">
    <source>
        <dbReference type="RGD" id="631417"/>
    </source>
</evidence>